<reference key="1">
    <citation type="submission" date="2007-02" db="EMBL/GenBank/DDBJ databases">
        <title>Complete sequence of chromosome of Yersinia pestis Pestoides F.</title>
        <authorList>
            <consortium name="US DOE Joint Genome Institute"/>
            <person name="Copeland A."/>
            <person name="Lucas S."/>
            <person name="Lapidus A."/>
            <person name="Barry K."/>
            <person name="Detter J.C."/>
            <person name="Glavina del Rio T."/>
            <person name="Hammon N."/>
            <person name="Israni S."/>
            <person name="Dalin E."/>
            <person name="Tice H."/>
            <person name="Pitluck S."/>
            <person name="Di Bartolo G."/>
            <person name="Chain P."/>
            <person name="Malfatti S."/>
            <person name="Shin M."/>
            <person name="Vergez L."/>
            <person name="Schmutz J."/>
            <person name="Larimer F."/>
            <person name="Land M."/>
            <person name="Hauser L."/>
            <person name="Worsham P."/>
            <person name="Chu M."/>
            <person name="Bearden S."/>
            <person name="Garcia E."/>
            <person name="Richardson P."/>
        </authorList>
    </citation>
    <scope>NUCLEOTIDE SEQUENCE [LARGE SCALE GENOMIC DNA]</scope>
    <source>
        <strain>Pestoides F</strain>
    </source>
</reference>
<keyword id="KW-0997">Cell inner membrane</keyword>
<keyword id="KW-1003">Cell membrane</keyword>
<keyword id="KW-0472">Membrane</keyword>
<keyword id="KW-0762">Sugar transport</keyword>
<keyword id="KW-0769">Symport</keyword>
<keyword id="KW-0812">Transmembrane</keyword>
<keyword id="KW-1133">Transmembrane helix</keyword>
<keyword id="KW-0813">Transport</keyword>
<dbReference type="EMBL" id="CP000668">
    <property type="protein sequence ID" value="ABP41987.1"/>
    <property type="molecule type" value="Genomic_DNA"/>
</dbReference>
<dbReference type="RefSeq" id="WP_002209111.1">
    <property type="nucleotide sequence ID" value="NZ_CP009715.1"/>
</dbReference>
<dbReference type="GeneID" id="57974271"/>
<dbReference type="KEGG" id="ypp:YPDSF_3637"/>
<dbReference type="PATRIC" id="fig|386656.14.peg.298"/>
<dbReference type="GO" id="GO:0005886">
    <property type="term" value="C:plasma membrane"/>
    <property type="evidence" value="ECO:0007669"/>
    <property type="project" value="UniProtKB-SubCell"/>
</dbReference>
<dbReference type="GO" id="GO:0015153">
    <property type="term" value="F:rhamnose transmembrane transporter activity"/>
    <property type="evidence" value="ECO:0007669"/>
    <property type="project" value="UniProtKB-UniRule"/>
</dbReference>
<dbReference type="GO" id="GO:0015293">
    <property type="term" value="F:symporter activity"/>
    <property type="evidence" value="ECO:0007669"/>
    <property type="project" value="UniProtKB-KW"/>
</dbReference>
<dbReference type="HAMAP" id="MF_01532">
    <property type="entry name" value="RhaT"/>
    <property type="match status" value="1"/>
</dbReference>
<dbReference type="InterPro" id="IPR004673">
    <property type="entry name" value="L-rhamnose-proton_sym_RhaT"/>
</dbReference>
<dbReference type="NCBIfam" id="NF010021">
    <property type="entry name" value="PRK13499.1-1"/>
    <property type="match status" value="1"/>
</dbReference>
<dbReference type="NCBIfam" id="NF010023">
    <property type="entry name" value="PRK13499.1-3"/>
    <property type="match status" value="1"/>
</dbReference>
<dbReference type="NCBIfam" id="TIGR00776">
    <property type="entry name" value="RhaT"/>
    <property type="match status" value="1"/>
</dbReference>
<dbReference type="Pfam" id="PF06379">
    <property type="entry name" value="RhaT"/>
    <property type="match status" value="1"/>
</dbReference>
<proteinExistence type="inferred from homology"/>
<comment type="function">
    <text evidence="1">Uptake of L-rhamnose across the cytoplasmic membrane with the concomitant transport of protons into the cell (symport system).</text>
</comment>
<comment type="catalytic activity">
    <reaction evidence="1">
        <text>L-rhamnopyranose(in) + H(+)(in) = L-rhamnopyranose(out) + H(+)(out)</text>
        <dbReference type="Rhea" id="RHEA:29947"/>
        <dbReference type="ChEBI" id="CHEBI:15378"/>
        <dbReference type="ChEBI" id="CHEBI:62346"/>
    </reaction>
    <physiologicalReaction direction="right-to-left" evidence="1">
        <dbReference type="Rhea" id="RHEA:29949"/>
    </physiologicalReaction>
</comment>
<comment type="subcellular location">
    <subcellularLocation>
        <location evidence="1">Cell inner membrane</location>
        <topology evidence="1">Multi-pass membrane protein</topology>
    </subcellularLocation>
</comment>
<comment type="similarity">
    <text evidence="1">Belongs to the L-rhamnose transporter (TC 2.A.7.6) family.</text>
</comment>
<gene>
    <name evidence="1" type="primary">rhaT</name>
    <name type="ordered locus">YPDSF_3637</name>
</gene>
<accession>A4TRS5</accession>
<sequence length="344" mass="37458">MNNAIILGIIWHLVGAASAACFYAPFKQVKKWSWETMWSIGGLVSWLILPWTVSYLLLPDFWQYYGSFSIATLLPVFLFGAMWGIGNINYGLTMRYLGMSMGIGIAIGITLIIGTLMTPILQGRFDVLLGTPGGRMTLLGVFVALIGVAIVSYAGLLKERAMGIQAEEFNLKKGLILAVMCGIFSAGMSFAMDAAKPMHEAASALGINSLYVALPSYVIIMGGGAIINLSYCFIRLATLKNLSVKADFSVAKPLLITNILFSALAGLMWYLQFFFYAWGHAKIPQQYDYMSWMLHMSFYVLCGGIVGLLLKEWKCSTKKPVAVLCIGCLVIILAANIVGLGMAA</sequence>
<protein>
    <recommendedName>
        <fullName evidence="1">L-rhamnose-proton symporter</fullName>
    </recommendedName>
    <alternativeName>
        <fullName evidence="1">L-rhamnose-H(+) transport protein</fullName>
    </alternativeName>
</protein>
<feature type="chain" id="PRO_1000068695" description="L-rhamnose-proton symporter">
    <location>
        <begin position="1"/>
        <end position="344"/>
    </location>
</feature>
<feature type="transmembrane region" description="Helical" evidence="1">
    <location>
        <begin position="4"/>
        <end position="24"/>
    </location>
</feature>
<feature type="transmembrane region" description="Helical" evidence="1">
    <location>
        <begin position="38"/>
        <end position="58"/>
    </location>
</feature>
<feature type="transmembrane region" description="Helical" evidence="1">
    <location>
        <begin position="68"/>
        <end position="88"/>
    </location>
</feature>
<feature type="transmembrane region" description="Helical" evidence="1">
    <location>
        <begin position="101"/>
        <end position="121"/>
    </location>
</feature>
<feature type="transmembrane region" description="Helical" evidence="1">
    <location>
        <begin position="137"/>
        <end position="157"/>
    </location>
</feature>
<feature type="transmembrane region" description="Helical" evidence="1">
    <location>
        <begin position="175"/>
        <end position="195"/>
    </location>
</feature>
<feature type="transmembrane region" description="Helical" evidence="1">
    <location>
        <begin position="207"/>
        <end position="227"/>
    </location>
</feature>
<feature type="transmembrane region" description="Helical" evidence="1">
    <location>
        <begin position="259"/>
        <end position="279"/>
    </location>
</feature>
<feature type="transmembrane region" description="Helical" evidence="1">
    <location>
        <begin position="290"/>
        <end position="310"/>
    </location>
</feature>
<feature type="transmembrane region" description="Helical" evidence="1">
    <location>
        <begin position="321"/>
        <end position="341"/>
    </location>
</feature>
<evidence type="ECO:0000255" key="1">
    <source>
        <dbReference type="HAMAP-Rule" id="MF_01532"/>
    </source>
</evidence>
<organism>
    <name type="scientific">Yersinia pestis (strain Pestoides F)</name>
    <dbReference type="NCBI Taxonomy" id="386656"/>
    <lineage>
        <taxon>Bacteria</taxon>
        <taxon>Pseudomonadati</taxon>
        <taxon>Pseudomonadota</taxon>
        <taxon>Gammaproteobacteria</taxon>
        <taxon>Enterobacterales</taxon>
        <taxon>Yersiniaceae</taxon>
        <taxon>Yersinia</taxon>
    </lineage>
</organism>
<name>RHAT_YERPP</name>